<dbReference type="EMBL" id="CR954253">
    <property type="protein sequence ID" value="CAI98113.1"/>
    <property type="molecule type" value="Genomic_DNA"/>
</dbReference>
<dbReference type="RefSeq" id="WP_011543996.1">
    <property type="nucleotide sequence ID" value="NC_008054.1"/>
</dbReference>
<dbReference type="SMR" id="Q1G9R3"/>
<dbReference type="STRING" id="390333.Ldb1312"/>
<dbReference type="KEGG" id="ldb:Ldb1312"/>
<dbReference type="PATRIC" id="fig|390333.13.peg.1595"/>
<dbReference type="eggNOG" id="COG0484">
    <property type="taxonomic scope" value="Bacteria"/>
</dbReference>
<dbReference type="HOGENOM" id="CLU_017633_0_7_9"/>
<dbReference type="BioCyc" id="LDEL390333:LDB_RS05610-MONOMER"/>
<dbReference type="Proteomes" id="UP000001259">
    <property type="component" value="Chromosome"/>
</dbReference>
<dbReference type="GO" id="GO:0005737">
    <property type="term" value="C:cytoplasm"/>
    <property type="evidence" value="ECO:0007669"/>
    <property type="project" value="UniProtKB-SubCell"/>
</dbReference>
<dbReference type="GO" id="GO:0005524">
    <property type="term" value="F:ATP binding"/>
    <property type="evidence" value="ECO:0007669"/>
    <property type="project" value="InterPro"/>
</dbReference>
<dbReference type="GO" id="GO:0031072">
    <property type="term" value="F:heat shock protein binding"/>
    <property type="evidence" value="ECO:0007669"/>
    <property type="project" value="InterPro"/>
</dbReference>
<dbReference type="GO" id="GO:0051082">
    <property type="term" value="F:unfolded protein binding"/>
    <property type="evidence" value="ECO:0007669"/>
    <property type="project" value="UniProtKB-UniRule"/>
</dbReference>
<dbReference type="GO" id="GO:0008270">
    <property type="term" value="F:zinc ion binding"/>
    <property type="evidence" value="ECO:0007669"/>
    <property type="project" value="UniProtKB-UniRule"/>
</dbReference>
<dbReference type="GO" id="GO:0051085">
    <property type="term" value="P:chaperone cofactor-dependent protein refolding"/>
    <property type="evidence" value="ECO:0007669"/>
    <property type="project" value="TreeGrafter"/>
</dbReference>
<dbReference type="GO" id="GO:0006260">
    <property type="term" value="P:DNA replication"/>
    <property type="evidence" value="ECO:0007669"/>
    <property type="project" value="UniProtKB-KW"/>
</dbReference>
<dbReference type="GO" id="GO:0042026">
    <property type="term" value="P:protein refolding"/>
    <property type="evidence" value="ECO:0007669"/>
    <property type="project" value="TreeGrafter"/>
</dbReference>
<dbReference type="GO" id="GO:0009408">
    <property type="term" value="P:response to heat"/>
    <property type="evidence" value="ECO:0007669"/>
    <property type="project" value="InterPro"/>
</dbReference>
<dbReference type="CDD" id="cd06257">
    <property type="entry name" value="DnaJ"/>
    <property type="match status" value="1"/>
</dbReference>
<dbReference type="CDD" id="cd10747">
    <property type="entry name" value="DnaJ_C"/>
    <property type="match status" value="1"/>
</dbReference>
<dbReference type="CDD" id="cd10719">
    <property type="entry name" value="DnaJ_zf"/>
    <property type="match status" value="1"/>
</dbReference>
<dbReference type="FunFam" id="2.60.260.20:FF:000005">
    <property type="entry name" value="Chaperone protein dnaJ 1, mitochondrial"/>
    <property type="match status" value="1"/>
</dbReference>
<dbReference type="FunFam" id="1.10.287.110:FF:000031">
    <property type="entry name" value="Molecular chaperone DnaJ"/>
    <property type="match status" value="1"/>
</dbReference>
<dbReference type="FunFam" id="2.10.230.10:FF:000002">
    <property type="entry name" value="Molecular chaperone DnaJ"/>
    <property type="match status" value="1"/>
</dbReference>
<dbReference type="Gene3D" id="1.10.287.110">
    <property type="entry name" value="DnaJ domain"/>
    <property type="match status" value="1"/>
</dbReference>
<dbReference type="Gene3D" id="2.10.230.10">
    <property type="entry name" value="Heat shock protein DnaJ, cysteine-rich domain"/>
    <property type="match status" value="1"/>
</dbReference>
<dbReference type="Gene3D" id="2.60.260.20">
    <property type="entry name" value="Urease metallochaperone UreE, N-terminal domain"/>
    <property type="match status" value="2"/>
</dbReference>
<dbReference type="HAMAP" id="MF_01152">
    <property type="entry name" value="DnaJ"/>
    <property type="match status" value="1"/>
</dbReference>
<dbReference type="InterPro" id="IPR012724">
    <property type="entry name" value="DnaJ"/>
</dbReference>
<dbReference type="InterPro" id="IPR002939">
    <property type="entry name" value="DnaJ_C"/>
</dbReference>
<dbReference type="InterPro" id="IPR001623">
    <property type="entry name" value="DnaJ_domain"/>
</dbReference>
<dbReference type="InterPro" id="IPR018253">
    <property type="entry name" value="DnaJ_domain_CS"/>
</dbReference>
<dbReference type="InterPro" id="IPR008971">
    <property type="entry name" value="HSP40/DnaJ_pept-bd"/>
</dbReference>
<dbReference type="InterPro" id="IPR001305">
    <property type="entry name" value="HSP_DnaJ_Cys-rich_dom"/>
</dbReference>
<dbReference type="InterPro" id="IPR036410">
    <property type="entry name" value="HSP_DnaJ_Cys-rich_dom_sf"/>
</dbReference>
<dbReference type="InterPro" id="IPR036869">
    <property type="entry name" value="J_dom_sf"/>
</dbReference>
<dbReference type="NCBIfam" id="TIGR02349">
    <property type="entry name" value="DnaJ_bact"/>
    <property type="match status" value="1"/>
</dbReference>
<dbReference type="NCBIfam" id="NF008035">
    <property type="entry name" value="PRK10767.1"/>
    <property type="match status" value="1"/>
</dbReference>
<dbReference type="NCBIfam" id="NF010869">
    <property type="entry name" value="PRK14276.1"/>
    <property type="match status" value="1"/>
</dbReference>
<dbReference type="PANTHER" id="PTHR43096:SF48">
    <property type="entry name" value="CHAPERONE PROTEIN DNAJ"/>
    <property type="match status" value="1"/>
</dbReference>
<dbReference type="PANTHER" id="PTHR43096">
    <property type="entry name" value="DNAJ HOMOLOG 1, MITOCHONDRIAL-RELATED"/>
    <property type="match status" value="1"/>
</dbReference>
<dbReference type="Pfam" id="PF00226">
    <property type="entry name" value="DnaJ"/>
    <property type="match status" value="1"/>
</dbReference>
<dbReference type="Pfam" id="PF01556">
    <property type="entry name" value="DnaJ_C"/>
    <property type="match status" value="1"/>
</dbReference>
<dbReference type="Pfam" id="PF00684">
    <property type="entry name" value="DnaJ_CXXCXGXG"/>
    <property type="match status" value="1"/>
</dbReference>
<dbReference type="PRINTS" id="PR00625">
    <property type="entry name" value="JDOMAIN"/>
</dbReference>
<dbReference type="SMART" id="SM00271">
    <property type="entry name" value="DnaJ"/>
    <property type="match status" value="1"/>
</dbReference>
<dbReference type="SUPFAM" id="SSF46565">
    <property type="entry name" value="Chaperone J-domain"/>
    <property type="match status" value="1"/>
</dbReference>
<dbReference type="SUPFAM" id="SSF57938">
    <property type="entry name" value="DnaJ/Hsp40 cysteine-rich domain"/>
    <property type="match status" value="1"/>
</dbReference>
<dbReference type="SUPFAM" id="SSF49493">
    <property type="entry name" value="HSP40/DnaJ peptide-binding domain"/>
    <property type="match status" value="2"/>
</dbReference>
<dbReference type="PROSITE" id="PS00636">
    <property type="entry name" value="DNAJ_1"/>
    <property type="match status" value="1"/>
</dbReference>
<dbReference type="PROSITE" id="PS50076">
    <property type="entry name" value="DNAJ_2"/>
    <property type="match status" value="1"/>
</dbReference>
<dbReference type="PROSITE" id="PS51188">
    <property type="entry name" value="ZF_CR"/>
    <property type="match status" value="1"/>
</dbReference>
<evidence type="ECO:0000255" key="1">
    <source>
        <dbReference type="HAMAP-Rule" id="MF_01152"/>
    </source>
</evidence>
<organism>
    <name type="scientific">Lactobacillus delbrueckii subsp. bulgaricus (strain ATCC 11842 / DSM 20081 / BCRC 10696 / JCM 1002 / NBRC 13953 / NCIMB 11778 / NCTC 12712 / WDCM 00102 / Lb 14)</name>
    <dbReference type="NCBI Taxonomy" id="390333"/>
    <lineage>
        <taxon>Bacteria</taxon>
        <taxon>Bacillati</taxon>
        <taxon>Bacillota</taxon>
        <taxon>Bacilli</taxon>
        <taxon>Lactobacillales</taxon>
        <taxon>Lactobacillaceae</taxon>
        <taxon>Lactobacillus</taxon>
    </lineage>
</organism>
<name>DNAJ_LACDA</name>
<reference key="1">
    <citation type="journal article" date="2006" name="Proc. Natl. Acad. Sci. U.S.A.">
        <title>The complete genome sequence of Lactobacillus bulgaricus reveals extensive and ongoing reductive evolution.</title>
        <authorList>
            <person name="van de Guchte M."/>
            <person name="Penaud S."/>
            <person name="Grimaldi C."/>
            <person name="Barbe V."/>
            <person name="Bryson K."/>
            <person name="Nicolas P."/>
            <person name="Robert C."/>
            <person name="Oztas S."/>
            <person name="Mangenot S."/>
            <person name="Couloux A."/>
            <person name="Loux V."/>
            <person name="Dervyn R."/>
            <person name="Bossy R."/>
            <person name="Bolotin A."/>
            <person name="Batto J.-M."/>
            <person name="Walunas T."/>
            <person name="Gibrat J.-F."/>
            <person name="Bessieres P."/>
            <person name="Weissenbach J."/>
            <person name="Ehrlich S.D."/>
            <person name="Maguin E."/>
        </authorList>
    </citation>
    <scope>NUCLEOTIDE SEQUENCE [LARGE SCALE GENOMIC DNA]</scope>
    <source>
        <strain>ATCC 11842 / DSM 20081 / BCRC 10696 / JCM 1002 / NBRC 13953 / NCIMB 11778 / NCTC 12712 / WDCM 00102 / Lb 14</strain>
    </source>
</reference>
<sequence length="378" mass="40916">MAANRDYYDVLGVSRDASDAEISKAYRKLAKKYHPDLNHEAGAEEKYKEVNEAYEVLHDPQKRQQYDQFGQAGMNGQGGFGGQYGGQGFGGADFGDFGDIFSSFFGGARQQVDPTAPQRGADLDYTMTIDFMDAIKGKTSEISYSRSTTCEVCKGSGAEKGTHPITCDKCGGSGMMTITQRSVLGMIQRQTTCDKCTGSGVIIQHPCHNCHGKGVKTQKQTLQVKVPAGIDNGQQIRLAGQGEAGKNGGPYGDLYIVFRVRPSKDFTRRGQTIYTTVPISFAQATLGDEINVKTVYGDTKLKIPAGTQPNQKFTLKEKGVPSLRGGSTGDQVTTVEIVIPKSINEAQRKALLEFVKASGGSIAPQEKGFFERLKEKLS</sequence>
<protein>
    <recommendedName>
        <fullName evidence="1">Chaperone protein DnaJ</fullName>
    </recommendedName>
</protein>
<gene>
    <name evidence="1" type="primary">dnaJ</name>
    <name type="ordered locus">Ldb1312</name>
</gene>
<keyword id="KW-0143">Chaperone</keyword>
<keyword id="KW-0963">Cytoplasm</keyword>
<keyword id="KW-0235">DNA replication</keyword>
<keyword id="KW-0479">Metal-binding</keyword>
<keyword id="KW-1185">Reference proteome</keyword>
<keyword id="KW-0677">Repeat</keyword>
<keyword id="KW-0346">Stress response</keyword>
<keyword id="KW-0862">Zinc</keyword>
<keyword id="KW-0863">Zinc-finger</keyword>
<feature type="chain" id="PRO_1000137697" description="Chaperone protein DnaJ">
    <location>
        <begin position="1"/>
        <end position="378"/>
    </location>
</feature>
<feature type="domain" description="J" evidence="1">
    <location>
        <begin position="6"/>
        <end position="70"/>
    </location>
</feature>
<feature type="repeat" description="CXXCXGXG motif">
    <location>
        <begin position="150"/>
        <end position="157"/>
    </location>
</feature>
<feature type="repeat" description="CXXCXGXG motif">
    <location>
        <begin position="167"/>
        <end position="174"/>
    </location>
</feature>
<feature type="repeat" description="CXXCXGXG motif">
    <location>
        <begin position="193"/>
        <end position="200"/>
    </location>
</feature>
<feature type="repeat" description="CXXCXGXG motif">
    <location>
        <begin position="207"/>
        <end position="214"/>
    </location>
</feature>
<feature type="zinc finger region" description="CR-type" evidence="1">
    <location>
        <begin position="137"/>
        <end position="219"/>
    </location>
</feature>
<feature type="binding site" evidence="1">
    <location>
        <position position="150"/>
    </location>
    <ligand>
        <name>Zn(2+)</name>
        <dbReference type="ChEBI" id="CHEBI:29105"/>
        <label>1</label>
    </ligand>
</feature>
<feature type="binding site" evidence="1">
    <location>
        <position position="153"/>
    </location>
    <ligand>
        <name>Zn(2+)</name>
        <dbReference type="ChEBI" id="CHEBI:29105"/>
        <label>1</label>
    </ligand>
</feature>
<feature type="binding site" evidence="1">
    <location>
        <position position="167"/>
    </location>
    <ligand>
        <name>Zn(2+)</name>
        <dbReference type="ChEBI" id="CHEBI:29105"/>
        <label>2</label>
    </ligand>
</feature>
<feature type="binding site" evidence="1">
    <location>
        <position position="170"/>
    </location>
    <ligand>
        <name>Zn(2+)</name>
        <dbReference type="ChEBI" id="CHEBI:29105"/>
        <label>2</label>
    </ligand>
</feature>
<feature type="binding site" evidence="1">
    <location>
        <position position="193"/>
    </location>
    <ligand>
        <name>Zn(2+)</name>
        <dbReference type="ChEBI" id="CHEBI:29105"/>
        <label>2</label>
    </ligand>
</feature>
<feature type="binding site" evidence="1">
    <location>
        <position position="196"/>
    </location>
    <ligand>
        <name>Zn(2+)</name>
        <dbReference type="ChEBI" id="CHEBI:29105"/>
        <label>2</label>
    </ligand>
</feature>
<feature type="binding site" evidence="1">
    <location>
        <position position="207"/>
    </location>
    <ligand>
        <name>Zn(2+)</name>
        <dbReference type="ChEBI" id="CHEBI:29105"/>
        <label>1</label>
    </ligand>
</feature>
<feature type="binding site" evidence="1">
    <location>
        <position position="210"/>
    </location>
    <ligand>
        <name>Zn(2+)</name>
        <dbReference type="ChEBI" id="CHEBI:29105"/>
        <label>1</label>
    </ligand>
</feature>
<accession>Q1G9R3</accession>
<proteinExistence type="inferred from homology"/>
<comment type="function">
    <text evidence="1">Participates actively in the response to hyperosmotic and heat shock by preventing the aggregation of stress-denatured proteins and by disaggregating proteins, also in an autonomous, DnaK-independent fashion. Unfolded proteins bind initially to DnaJ; upon interaction with the DnaJ-bound protein, DnaK hydrolyzes its bound ATP, resulting in the formation of a stable complex. GrpE releases ADP from DnaK; ATP binding to DnaK triggers the release of the substrate protein, thus completing the reaction cycle. Several rounds of ATP-dependent interactions between DnaJ, DnaK and GrpE are required for fully efficient folding. Also involved, together with DnaK and GrpE, in the DNA replication of plasmids through activation of initiation proteins.</text>
</comment>
<comment type="cofactor">
    <cofactor evidence="1">
        <name>Zn(2+)</name>
        <dbReference type="ChEBI" id="CHEBI:29105"/>
    </cofactor>
    <text evidence="1">Binds 2 Zn(2+) ions per monomer.</text>
</comment>
<comment type="subunit">
    <text evidence="1">Homodimer.</text>
</comment>
<comment type="subcellular location">
    <subcellularLocation>
        <location evidence="1">Cytoplasm</location>
    </subcellularLocation>
</comment>
<comment type="domain">
    <text evidence="1">The J domain is necessary and sufficient to stimulate DnaK ATPase activity. Zinc center 1 plays an important role in the autonomous, DnaK-independent chaperone activity of DnaJ. Zinc center 2 is essential for interaction with DnaK and for DnaJ activity.</text>
</comment>
<comment type="similarity">
    <text evidence="1">Belongs to the DnaJ family.</text>
</comment>